<accession>A9KPK9</accession>
<protein>
    <recommendedName>
        <fullName evidence="1">Homoserine O-acetyltransferase</fullName>
        <shortName evidence="1">HAT</shortName>
        <ecNumber evidence="1">2.3.1.31</ecNumber>
    </recommendedName>
    <alternativeName>
        <fullName evidence="1">Homoserine transacetylase</fullName>
        <shortName evidence="1">HTA</shortName>
    </alternativeName>
</protein>
<dbReference type="EC" id="2.3.1.31" evidence="1"/>
<dbReference type="EMBL" id="CP000885">
    <property type="protein sequence ID" value="ABX43283.1"/>
    <property type="molecule type" value="Genomic_DNA"/>
</dbReference>
<dbReference type="RefSeq" id="WP_012200934.1">
    <property type="nucleotide sequence ID" value="NC_010001.1"/>
</dbReference>
<dbReference type="SMR" id="A9KPK9"/>
<dbReference type="STRING" id="357809.Cphy_2925"/>
<dbReference type="KEGG" id="cpy:Cphy_2925"/>
<dbReference type="eggNOG" id="COG1897">
    <property type="taxonomic scope" value="Bacteria"/>
</dbReference>
<dbReference type="HOGENOM" id="CLU_057851_0_1_9"/>
<dbReference type="OrthoDB" id="9772423at2"/>
<dbReference type="UniPathway" id="UPA00051">
    <property type="reaction ID" value="UER00074"/>
</dbReference>
<dbReference type="Proteomes" id="UP000000370">
    <property type="component" value="Chromosome"/>
</dbReference>
<dbReference type="GO" id="GO:0005737">
    <property type="term" value="C:cytoplasm"/>
    <property type="evidence" value="ECO:0007669"/>
    <property type="project" value="UniProtKB-SubCell"/>
</dbReference>
<dbReference type="GO" id="GO:0004414">
    <property type="term" value="F:homoserine O-acetyltransferase activity"/>
    <property type="evidence" value="ECO:0007669"/>
    <property type="project" value="UniProtKB-EC"/>
</dbReference>
<dbReference type="GO" id="GO:0008899">
    <property type="term" value="F:homoserine O-succinyltransferase activity"/>
    <property type="evidence" value="ECO:0007669"/>
    <property type="project" value="UniProtKB-UniRule"/>
</dbReference>
<dbReference type="GO" id="GO:0019281">
    <property type="term" value="P:L-methionine biosynthetic process from homoserine via O-succinyl-L-homoserine and cystathionine"/>
    <property type="evidence" value="ECO:0007669"/>
    <property type="project" value="InterPro"/>
</dbReference>
<dbReference type="CDD" id="cd03131">
    <property type="entry name" value="GATase1_HTS"/>
    <property type="match status" value="1"/>
</dbReference>
<dbReference type="FunFam" id="3.40.50.880:FF:000004">
    <property type="entry name" value="Homoserine O-succinyltransferase"/>
    <property type="match status" value="1"/>
</dbReference>
<dbReference type="Gene3D" id="3.40.50.880">
    <property type="match status" value="1"/>
</dbReference>
<dbReference type="HAMAP" id="MF_00295">
    <property type="entry name" value="MetA_acyltransf"/>
    <property type="match status" value="1"/>
</dbReference>
<dbReference type="InterPro" id="IPR029062">
    <property type="entry name" value="Class_I_gatase-like"/>
</dbReference>
<dbReference type="InterPro" id="IPR005697">
    <property type="entry name" value="HST_MetA"/>
</dbReference>
<dbReference type="InterPro" id="IPR033752">
    <property type="entry name" value="MetA_family"/>
</dbReference>
<dbReference type="NCBIfam" id="TIGR01001">
    <property type="entry name" value="metA"/>
    <property type="match status" value="1"/>
</dbReference>
<dbReference type="PANTHER" id="PTHR20919">
    <property type="entry name" value="HOMOSERINE O-SUCCINYLTRANSFERASE"/>
    <property type="match status" value="1"/>
</dbReference>
<dbReference type="PANTHER" id="PTHR20919:SF0">
    <property type="entry name" value="HOMOSERINE O-SUCCINYLTRANSFERASE"/>
    <property type="match status" value="1"/>
</dbReference>
<dbReference type="Pfam" id="PF04204">
    <property type="entry name" value="HTS"/>
    <property type="match status" value="1"/>
</dbReference>
<dbReference type="PIRSF" id="PIRSF000450">
    <property type="entry name" value="H_ser_succinyltr"/>
    <property type="match status" value="1"/>
</dbReference>
<dbReference type="SUPFAM" id="SSF52317">
    <property type="entry name" value="Class I glutamine amidotransferase-like"/>
    <property type="match status" value="1"/>
</dbReference>
<proteinExistence type="inferred from homology"/>
<organism>
    <name type="scientific">Lachnoclostridium phytofermentans (strain ATCC 700394 / DSM 18823 / ISDg)</name>
    <name type="common">Clostridium phytofermentans</name>
    <dbReference type="NCBI Taxonomy" id="357809"/>
    <lineage>
        <taxon>Bacteria</taxon>
        <taxon>Bacillati</taxon>
        <taxon>Bacillota</taxon>
        <taxon>Clostridia</taxon>
        <taxon>Lachnospirales</taxon>
        <taxon>Lachnospiraceae</taxon>
    </lineage>
</organism>
<name>METAA_LACP7</name>
<evidence type="ECO:0000255" key="1">
    <source>
        <dbReference type="HAMAP-Rule" id="MF_00295"/>
    </source>
</evidence>
<comment type="function">
    <text evidence="1">Transfers an acetyl group from acetyl-CoA to L-homoserine, forming acetyl-L-homoserine.</text>
</comment>
<comment type="catalytic activity">
    <reaction evidence="1">
        <text>L-homoserine + acetyl-CoA = O-acetyl-L-homoserine + CoA</text>
        <dbReference type="Rhea" id="RHEA:13701"/>
        <dbReference type="ChEBI" id="CHEBI:57287"/>
        <dbReference type="ChEBI" id="CHEBI:57288"/>
        <dbReference type="ChEBI" id="CHEBI:57476"/>
        <dbReference type="ChEBI" id="CHEBI:57716"/>
        <dbReference type="EC" id="2.3.1.31"/>
    </reaction>
</comment>
<comment type="pathway">
    <text evidence="1">Amino-acid biosynthesis; L-methionine biosynthesis via de novo pathway; O-acetyl-L-homoserine from L-homoserine: step 1/1.</text>
</comment>
<comment type="subcellular location">
    <subcellularLocation>
        <location evidence="1">Cytoplasm</location>
    </subcellularLocation>
</comment>
<comment type="similarity">
    <text evidence="1">Belongs to the MetA family.</text>
</comment>
<gene>
    <name evidence="1" type="primary">metAA</name>
    <name type="ordered locus">Cphy_2925</name>
</gene>
<reference key="1">
    <citation type="submission" date="2007-11" db="EMBL/GenBank/DDBJ databases">
        <title>Complete genome sequence of Clostridium phytofermentans ISDg.</title>
        <authorList>
            <person name="Leschine S.B."/>
            <person name="Warnick T.A."/>
            <person name="Blanchard J.L."/>
            <person name="Schnell D.J."/>
            <person name="Petit E.L."/>
            <person name="LaTouf W.G."/>
            <person name="Copeland A."/>
            <person name="Lucas S."/>
            <person name="Lapidus A."/>
            <person name="Barry K."/>
            <person name="Glavina del Rio T."/>
            <person name="Dalin E."/>
            <person name="Tice H."/>
            <person name="Pitluck S."/>
            <person name="Kiss H."/>
            <person name="Brettin T."/>
            <person name="Bruce D."/>
            <person name="Detter J.C."/>
            <person name="Han C."/>
            <person name="Kuske C."/>
            <person name="Schmutz J."/>
            <person name="Larimer F."/>
            <person name="Land M."/>
            <person name="Hauser L."/>
            <person name="Kyrpides N."/>
            <person name="Kim E.A."/>
            <person name="Richardson P."/>
        </authorList>
    </citation>
    <scope>NUCLEOTIDE SEQUENCE [LARGE SCALE GENOMIC DNA]</scope>
    <source>
        <strain>ATCC 700394 / DSM 18823 / ISDg</strain>
    </source>
</reference>
<sequence>MPIKVQNDLPAKKILEEENIFMMDEKRAMHQDIRPLKIAILNLMPLKEDTEVQLLRSLSNTPLQVDITFLTTDTYVGKNTATSHLEQFYLTHEDVKNRRFDGLIITGAPVEQMEFEEVAYWNELKKIMEWSKTHVTSTLHLCWGAQAGLYYHYGIKKYPLPDKMFGIFEHKLLNRKEPLVRGFDDVFLAPHSRHTETSREEILQNSDLTILAESEEAGVLIVMGGDGKHIFVMGHPEYDRITLDNEYKRDVNKGLEIQLPKNYYPSDDSMQRPNLSWRAHANALYTNWLNYYVYQVTPYEL</sequence>
<feature type="chain" id="PRO_1000078930" description="Homoserine O-acetyltransferase">
    <location>
        <begin position="1"/>
        <end position="301"/>
    </location>
</feature>
<feature type="active site" description="Acyl-thioester intermediate" evidence="1">
    <location>
        <position position="142"/>
    </location>
</feature>
<feature type="active site" description="Proton acceptor" evidence="1">
    <location>
        <position position="235"/>
    </location>
</feature>
<feature type="active site" evidence="1">
    <location>
        <position position="237"/>
    </location>
</feature>
<feature type="binding site" evidence="1">
    <location>
        <position position="163"/>
    </location>
    <ligand>
        <name>substrate</name>
    </ligand>
</feature>
<feature type="binding site" evidence="1">
    <location>
        <position position="192"/>
    </location>
    <ligand>
        <name>substrate</name>
    </ligand>
</feature>
<feature type="binding site" evidence="1">
    <location>
        <position position="249"/>
    </location>
    <ligand>
        <name>substrate</name>
    </ligand>
</feature>
<feature type="site" description="Important for acyl-CoA specificity" evidence="1">
    <location>
        <position position="111"/>
    </location>
</feature>
<feature type="site" description="Important for substrate specificity" evidence="1">
    <location>
        <position position="192"/>
    </location>
</feature>
<keyword id="KW-0012">Acyltransferase</keyword>
<keyword id="KW-0028">Amino-acid biosynthesis</keyword>
<keyword id="KW-0963">Cytoplasm</keyword>
<keyword id="KW-0486">Methionine biosynthesis</keyword>
<keyword id="KW-1185">Reference proteome</keyword>
<keyword id="KW-0808">Transferase</keyword>